<name>DMRTD_BOVIN</name>
<organism>
    <name type="scientific">Bos taurus</name>
    <name type="common">Bovine</name>
    <dbReference type="NCBI Taxonomy" id="9913"/>
    <lineage>
        <taxon>Eukaryota</taxon>
        <taxon>Metazoa</taxon>
        <taxon>Chordata</taxon>
        <taxon>Craniata</taxon>
        <taxon>Vertebrata</taxon>
        <taxon>Euteleostomi</taxon>
        <taxon>Mammalia</taxon>
        <taxon>Eutheria</taxon>
        <taxon>Laurasiatheria</taxon>
        <taxon>Artiodactyla</taxon>
        <taxon>Ruminantia</taxon>
        <taxon>Pecora</taxon>
        <taxon>Bovidae</taxon>
        <taxon>Bovinae</taxon>
        <taxon>Bos</taxon>
    </lineage>
</organism>
<gene>
    <name type="primary">DMRTC2</name>
</gene>
<proteinExistence type="evidence at transcript level"/>
<sequence>MDPSEMPAVHHCPSDSATGGETRAPQGMELIPRRAVRRSPTCARCRNHGVTAHLKGHKRLCLFQACECHKCVLILERRRVMAAQVALRRQQEAQLKRHLTQGLMRGAAPPRAPSRVKKGVTQPGVHSGKENIAPQPQIPHHVVPLALTSPGKENSRGPLLLSRPPEALPLPWTPMPPGPWAPGHWLPPGLSMPTPVVCRLLCQEPAIPLHPFPGFDPGTTLRLPTHGPLPTCTGSHPILTAPLSGESQGPSTLPRTCSTLILQPCGTPDPLLLQPQAPGPSRLTWTSASSEWQLQREAAEALVGLKDSSQAPRLTPGPANPAWISLLHPCGPPAAAGGRGFQPVGPSLRPSPAPSVALHIGRLGSISLLS</sequence>
<feature type="chain" id="PRO_0000244105" description="Doublesex- and mab-3-related transcription factor C2">
    <location>
        <begin position="1"/>
        <end position="370"/>
    </location>
</feature>
<feature type="DNA-binding region" description="DM" evidence="2">
    <location>
        <begin position="42"/>
        <end position="89"/>
    </location>
</feature>
<feature type="region of interest" description="Disordered" evidence="3">
    <location>
        <begin position="1"/>
        <end position="27"/>
    </location>
</feature>
<feature type="region of interest" description="Disordered" evidence="3">
    <location>
        <begin position="103"/>
        <end position="136"/>
    </location>
</feature>
<dbReference type="EMBL" id="BC109620">
    <property type="protein sequence ID" value="AAI09621.1"/>
    <property type="molecule type" value="mRNA"/>
</dbReference>
<dbReference type="RefSeq" id="NP_001033271.1">
    <property type="nucleotide sequence ID" value="NM_001038182.2"/>
</dbReference>
<dbReference type="SMR" id="Q32LE6"/>
<dbReference type="FunCoup" id="Q32LE6">
    <property type="interactions" value="5"/>
</dbReference>
<dbReference type="STRING" id="9913.ENSBTAP00000025660"/>
<dbReference type="PaxDb" id="9913-ENSBTAP00000025660"/>
<dbReference type="GeneID" id="539134"/>
<dbReference type="KEGG" id="bta:539134"/>
<dbReference type="CTD" id="63946"/>
<dbReference type="eggNOG" id="KOG3815">
    <property type="taxonomic scope" value="Eukaryota"/>
</dbReference>
<dbReference type="InParanoid" id="Q32LE6"/>
<dbReference type="OrthoDB" id="6162476at2759"/>
<dbReference type="Proteomes" id="UP000009136">
    <property type="component" value="Unplaced"/>
</dbReference>
<dbReference type="GO" id="GO:0005634">
    <property type="term" value="C:nucleus"/>
    <property type="evidence" value="ECO:0000318"/>
    <property type="project" value="GO_Central"/>
</dbReference>
<dbReference type="GO" id="GO:0046872">
    <property type="term" value="F:metal ion binding"/>
    <property type="evidence" value="ECO:0007669"/>
    <property type="project" value="UniProtKB-KW"/>
</dbReference>
<dbReference type="GO" id="GO:0043565">
    <property type="term" value="F:sequence-specific DNA binding"/>
    <property type="evidence" value="ECO:0007669"/>
    <property type="project" value="InterPro"/>
</dbReference>
<dbReference type="GO" id="GO:0030154">
    <property type="term" value="P:cell differentiation"/>
    <property type="evidence" value="ECO:0007669"/>
    <property type="project" value="UniProtKB-KW"/>
</dbReference>
<dbReference type="GO" id="GO:0006355">
    <property type="term" value="P:regulation of DNA-templated transcription"/>
    <property type="evidence" value="ECO:0007669"/>
    <property type="project" value="InterPro"/>
</dbReference>
<dbReference type="GO" id="GO:0007548">
    <property type="term" value="P:sex differentiation"/>
    <property type="evidence" value="ECO:0007669"/>
    <property type="project" value="UniProtKB-KW"/>
</dbReference>
<dbReference type="FunFam" id="4.10.1040.10:FF:000001">
    <property type="entry name" value="doublesex- and mab-3-related transcription factor 1"/>
    <property type="match status" value="1"/>
</dbReference>
<dbReference type="Gene3D" id="4.10.1040.10">
    <property type="entry name" value="DM DNA-binding domain"/>
    <property type="match status" value="1"/>
</dbReference>
<dbReference type="InterPro" id="IPR001275">
    <property type="entry name" value="DM_DNA-bd"/>
</dbReference>
<dbReference type="InterPro" id="IPR036407">
    <property type="entry name" value="DM_DNA-bd_sf"/>
</dbReference>
<dbReference type="InterPro" id="IPR026607">
    <property type="entry name" value="DMRT"/>
</dbReference>
<dbReference type="InterPro" id="IPR031577">
    <property type="entry name" value="DMRT-C1/C2_C"/>
</dbReference>
<dbReference type="PANTHER" id="PTHR12322">
    <property type="entry name" value="DOUBLESEX AND MAB-3 RELATED TRANSCRIPTION FACTOR DMRT"/>
    <property type="match status" value="1"/>
</dbReference>
<dbReference type="PANTHER" id="PTHR12322:SF124">
    <property type="entry name" value="DOUBLESEX- AND MAB-3-RELATED TRANSCRIPTION FACTOR C2"/>
    <property type="match status" value="1"/>
</dbReference>
<dbReference type="Pfam" id="PF00751">
    <property type="entry name" value="DM"/>
    <property type="match status" value="1"/>
</dbReference>
<dbReference type="Pfam" id="PF15791">
    <property type="entry name" value="DMRT-like"/>
    <property type="match status" value="1"/>
</dbReference>
<dbReference type="SMART" id="SM00301">
    <property type="entry name" value="DM"/>
    <property type="match status" value="1"/>
</dbReference>
<dbReference type="SUPFAM" id="SSF82927">
    <property type="entry name" value="Cysteine-rich DNA binding domain, (DM domain)"/>
    <property type="match status" value="1"/>
</dbReference>
<dbReference type="PROSITE" id="PS40000">
    <property type="entry name" value="DM_1"/>
    <property type="match status" value="1"/>
</dbReference>
<dbReference type="PROSITE" id="PS50809">
    <property type="entry name" value="DM_2"/>
    <property type="match status" value="1"/>
</dbReference>
<reference key="1">
    <citation type="submission" date="2005-11" db="EMBL/GenBank/DDBJ databases">
        <authorList>
            <consortium name="NIH - Mammalian Gene Collection (MGC) project"/>
        </authorList>
    </citation>
    <scope>NUCLEOTIDE SEQUENCE [LARGE SCALE MRNA]</scope>
    <source>
        <strain>Crossbred X Angus</strain>
        <tissue>Liver</tissue>
    </source>
</reference>
<keyword id="KW-0221">Differentiation</keyword>
<keyword id="KW-0238">DNA-binding</keyword>
<keyword id="KW-0479">Metal-binding</keyword>
<keyword id="KW-0539">Nucleus</keyword>
<keyword id="KW-1185">Reference proteome</keyword>
<keyword id="KW-0726">Sexual differentiation</keyword>
<keyword id="KW-0804">Transcription</keyword>
<keyword id="KW-0805">Transcription regulation</keyword>
<keyword id="KW-0862">Zinc</keyword>
<accession>Q32LE6</accession>
<comment type="function">
    <text evidence="1">May be involved in sexual development.</text>
</comment>
<comment type="subcellular location">
    <subcellularLocation>
        <location evidence="2">Nucleus</location>
    </subcellularLocation>
</comment>
<comment type="similarity">
    <text evidence="4">Belongs to the DMRT family.</text>
</comment>
<protein>
    <recommendedName>
        <fullName>Doublesex- and mab-3-related transcription factor C2</fullName>
    </recommendedName>
</protein>
<evidence type="ECO:0000250" key="1"/>
<evidence type="ECO:0000255" key="2">
    <source>
        <dbReference type="PROSITE-ProRule" id="PRU00070"/>
    </source>
</evidence>
<evidence type="ECO:0000256" key="3">
    <source>
        <dbReference type="SAM" id="MobiDB-lite"/>
    </source>
</evidence>
<evidence type="ECO:0000305" key="4"/>